<keyword id="KW-0963">Cytoplasm</keyword>
<keyword id="KW-0396">Initiation factor</keyword>
<keyword id="KW-0648">Protein biosynthesis</keyword>
<keyword id="KW-1185">Reference proteome</keyword>
<keyword id="KW-0677">Repeat</keyword>
<keyword id="KW-0853">WD repeat</keyword>
<proteinExistence type="inferred from homology"/>
<name>EIF3I_KLULA</name>
<reference key="1">
    <citation type="journal article" date="2004" name="Nature">
        <title>Genome evolution in yeasts.</title>
        <authorList>
            <person name="Dujon B."/>
            <person name="Sherman D."/>
            <person name="Fischer G."/>
            <person name="Durrens P."/>
            <person name="Casaregola S."/>
            <person name="Lafontaine I."/>
            <person name="de Montigny J."/>
            <person name="Marck C."/>
            <person name="Neuveglise C."/>
            <person name="Talla E."/>
            <person name="Goffard N."/>
            <person name="Frangeul L."/>
            <person name="Aigle M."/>
            <person name="Anthouard V."/>
            <person name="Babour A."/>
            <person name="Barbe V."/>
            <person name="Barnay S."/>
            <person name="Blanchin S."/>
            <person name="Beckerich J.-M."/>
            <person name="Beyne E."/>
            <person name="Bleykasten C."/>
            <person name="Boisrame A."/>
            <person name="Boyer J."/>
            <person name="Cattolico L."/>
            <person name="Confanioleri F."/>
            <person name="de Daruvar A."/>
            <person name="Despons L."/>
            <person name="Fabre E."/>
            <person name="Fairhead C."/>
            <person name="Ferry-Dumazet H."/>
            <person name="Groppi A."/>
            <person name="Hantraye F."/>
            <person name="Hennequin C."/>
            <person name="Jauniaux N."/>
            <person name="Joyet P."/>
            <person name="Kachouri R."/>
            <person name="Kerrest A."/>
            <person name="Koszul R."/>
            <person name="Lemaire M."/>
            <person name="Lesur I."/>
            <person name="Ma L."/>
            <person name="Muller H."/>
            <person name="Nicaud J.-M."/>
            <person name="Nikolski M."/>
            <person name="Oztas S."/>
            <person name="Ozier-Kalogeropoulos O."/>
            <person name="Pellenz S."/>
            <person name="Potier S."/>
            <person name="Richard G.-F."/>
            <person name="Straub M.-L."/>
            <person name="Suleau A."/>
            <person name="Swennen D."/>
            <person name="Tekaia F."/>
            <person name="Wesolowski-Louvel M."/>
            <person name="Westhof E."/>
            <person name="Wirth B."/>
            <person name="Zeniou-Meyer M."/>
            <person name="Zivanovic Y."/>
            <person name="Bolotin-Fukuhara M."/>
            <person name="Thierry A."/>
            <person name="Bouchier C."/>
            <person name="Caudron B."/>
            <person name="Scarpelli C."/>
            <person name="Gaillardin C."/>
            <person name="Weissenbach J."/>
            <person name="Wincker P."/>
            <person name="Souciet J.-L."/>
        </authorList>
    </citation>
    <scope>NUCLEOTIDE SEQUENCE [LARGE SCALE GENOMIC DNA]</scope>
    <source>
        <strain>ATCC 8585 / CBS 2359 / DSM 70799 / NBRC 1267 / NRRL Y-1140 / WM37</strain>
    </source>
</reference>
<dbReference type="EMBL" id="CR382126">
    <property type="protein sequence ID" value="CAG98124.1"/>
    <property type="molecule type" value="Genomic_DNA"/>
</dbReference>
<dbReference type="RefSeq" id="XP_455416.1">
    <property type="nucleotide sequence ID" value="XM_455416.1"/>
</dbReference>
<dbReference type="SMR" id="Q6CKX3"/>
<dbReference type="FunCoup" id="Q6CKX3">
    <property type="interactions" value="1177"/>
</dbReference>
<dbReference type="STRING" id="284590.Q6CKX3"/>
<dbReference type="PaxDb" id="284590-Q6CKX3"/>
<dbReference type="KEGG" id="kla:KLLA0_F07403g"/>
<dbReference type="eggNOG" id="KOG0643">
    <property type="taxonomic scope" value="Eukaryota"/>
</dbReference>
<dbReference type="HOGENOM" id="CLU_043845_0_1_1"/>
<dbReference type="InParanoid" id="Q6CKX3"/>
<dbReference type="OMA" id="VWFSHNG"/>
<dbReference type="Proteomes" id="UP000000598">
    <property type="component" value="Chromosome F"/>
</dbReference>
<dbReference type="GO" id="GO:0016282">
    <property type="term" value="C:eukaryotic 43S preinitiation complex"/>
    <property type="evidence" value="ECO:0007669"/>
    <property type="project" value="UniProtKB-UniRule"/>
</dbReference>
<dbReference type="GO" id="GO:0033290">
    <property type="term" value="C:eukaryotic 48S preinitiation complex"/>
    <property type="evidence" value="ECO:0007669"/>
    <property type="project" value="UniProtKB-UniRule"/>
</dbReference>
<dbReference type="GO" id="GO:0071541">
    <property type="term" value="C:eukaryotic translation initiation factor 3 complex, eIF3m"/>
    <property type="evidence" value="ECO:0007669"/>
    <property type="project" value="TreeGrafter"/>
</dbReference>
<dbReference type="GO" id="GO:0003723">
    <property type="term" value="F:RNA binding"/>
    <property type="evidence" value="ECO:0007669"/>
    <property type="project" value="TreeGrafter"/>
</dbReference>
<dbReference type="GO" id="GO:0003743">
    <property type="term" value="F:translation initiation factor activity"/>
    <property type="evidence" value="ECO:0007669"/>
    <property type="project" value="UniProtKB-UniRule"/>
</dbReference>
<dbReference type="GO" id="GO:0001732">
    <property type="term" value="P:formation of cytoplasmic translation initiation complex"/>
    <property type="evidence" value="ECO:0007669"/>
    <property type="project" value="UniProtKB-UniRule"/>
</dbReference>
<dbReference type="FunFam" id="2.130.10.10:FF:000127">
    <property type="entry name" value="Eukaryotic translation initiation factor 3 subunit I"/>
    <property type="match status" value="1"/>
</dbReference>
<dbReference type="Gene3D" id="2.130.10.10">
    <property type="entry name" value="YVTN repeat-like/Quinoprotein amine dehydrogenase"/>
    <property type="match status" value="1"/>
</dbReference>
<dbReference type="HAMAP" id="MF_03008">
    <property type="entry name" value="eIF3i"/>
    <property type="match status" value="1"/>
</dbReference>
<dbReference type="InterPro" id="IPR027525">
    <property type="entry name" value="eIF3i"/>
</dbReference>
<dbReference type="InterPro" id="IPR015943">
    <property type="entry name" value="WD40/YVTN_repeat-like_dom_sf"/>
</dbReference>
<dbReference type="InterPro" id="IPR036322">
    <property type="entry name" value="WD40_repeat_dom_sf"/>
</dbReference>
<dbReference type="InterPro" id="IPR001680">
    <property type="entry name" value="WD40_rpt"/>
</dbReference>
<dbReference type="PANTHER" id="PTHR19877">
    <property type="entry name" value="EUKARYOTIC TRANSLATION INITIATION FACTOR 3 SUBUNIT I"/>
    <property type="match status" value="1"/>
</dbReference>
<dbReference type="PANTHER" id="PTHR19877:SF1">
    <property type="entry name" value="EUKARYOTIC TRANSLATION INITIATION FACTOR 3 SUBUNIT I"/>
    <property type="match status" value="1"/>
</dbReference>
<dbReference type="Pfam" id="PF24805">
    <property type="entry name" value="EIF3I"/>
    <property type="match status" value="1"/>
</dbReference>
<dbReference type="SMART" id="SM00320">
    <property type="entry name" value="WD40"/>
    <property type="match status" value="6"/>
</dbReference>
<dbReference type="SUPFAM" id="SSF50978">
    <property type="entry name" value="WD40 repeat-like"/>
    <property type="match status" value="1"/>
</dbReference>
<dbReference type="PROSITE" id="PS50082">
    <property type="entry name" value="WD_REPEATS_2"/>
    <property type="match status" value="4"/>
</dbReference>
<dbReference type="PROSITE" id="PS50294">
    <property type="entry name" value="WD_REPEATS_REGION"/>
    <property type="match status" value="2"/>
</dbReference>
<feature type="chain" id="PRO_0000365368" description="Eukaryotic translation initiation factor 3 subunit I">
    <location>
        <begin position="1"/>
        <end position="347"/>
    </location>
</feature>
<feature type="repeat" description="WD 1">
    <location>
        <begin position="8"/>
        <end position="47"/>
    </location>
</feature>
<feature type="repeat" description="WD 2">
    <location>
        <begin position="50"/>
        <end position="89"/>
    </location>
</feature>
<feature type="repeat" description="WD 3">
    <location>
        <begin position="150"/>
        <end position="190"/>
    </location>
</feature>
<feature type="repeat" description="WD 4">
    <location>
        <begin position="192"/>
        <end position="233"/>
    </location>
</feature>
<feature type="repeat" description="WD 5">
    <location>
        <begin position="289"/>
        <end position="328"/>
    </location>
</feature>
<sequence>MRPIVLKGHERPLTQVKFNRDGDLVFACSKDSVASIWYAINGERLGTLDDHSGTIWSIDVDESTTYALTGGADFCFKIWKVATGVAVHSVSTRSPVLRVEFSPDGSKLLIVLDAVMGHIGSIVVYSLIRNENGEIVNVKEEPDYEITTIEQATKVFVASWSYNGKYIIAGHEDGQISAYYGENGEFVQAKKIHEKSIKDIQFSPDRTYFITSSRDSVASLVDVDTFEVLKTYKADCPLNSASITPLKEFVILGGGQDAKDVTTTSAREGKFEARIYHKVFQDEIGRVKGHFGPLNYVAVSPTGTSYASGGEDGYIRLHHFDKSYFDFKYDVEKTFEVERRQQLQKQE</sequence>
<comment type="function">
    <text evidence="1">Component of the eukaryotic translation initiation factor 3 (eIF-3) complex, which is involved in protein synthesis of a specialized repertoire of mRNAs and, together with other initiation factors, stimulates binding of mRNA and methionyl-tRNAi to the 40S ribosome. The eIF-3 complex specifically targets and initiates translation of a subset of mRNAs involved in cell proliferation.</text>
</comment>
<comment type="subunit">
    <text evidence="1">Component of the eukaryotic translation initiation factor 3 (eIF-3) complex.</text>
</comment>
<comment type="subcellular location">
    <subcellularLocation>
        <location evidence="1">Cytoplasm</location>
    </subcellularLocation>
</comment>
<comment type="similarity">
    <text evidence="1">Belongs to the eIF-3 subunit I family.</text>
</comment>
<organism>
    <name type="scientific">Kluyveromyces lactis (strain ATCC 8585 / CBS 2359 / DSM 70799 / NBRC 1267 / NRRL Y-1140 / WM37)</name>
    <name type="common">Yeast</name>
    <name type="synonym">Candida sphaerica</name>
    <dbReference type="NCBI Taxonomy" id="284590"/>
    <lineage>
        <taxon>Eukaryota</taxon>
        <taxon>Fungi</taxon>
        <taxon>Dikarya</taxon>
        <taxon>Ascomycota</taxon>
        <taxon>Saccharomycotina</taxon>
        <taxon>Saccharomycetes</taxon>
        <taxon>Saccharomycetales</taxon>
        <taxon>Saccharomycetaceae</taxon>
        <taxon>Kluyveromyces</taxon>
    </lineage>
</organism>
<gene>
    <name evidence="1" type="primary">TIF34</name>
    <name type="ordered locus">KLLA0F07403g</name>
</gene>
<protein>
    <recommendedName>
        <fullName evidence="1">Eukaryotic translation initiation factor 3 subunit I</fullName>
        <shortName evidence="1">eIF3i</shortName>
    </recommendedName>
    <alternativeName>
        <fullName evidence="1">Eukaryotic translation initiation factor 3 39 kDa subunit homolog</fullName>
        <shortName evidence="1">eIF-3 39 kDa subunit homolog</shortName>
    </alternativeName>
</protein>
<evidence type="ECO:0000255" key="1">
    <source>
        <dbReference type="HAMAP-Rule" id="MF_03008"/>
    </source>
</evidence>
<accession>Q6CKX3</accession>